<reference key="1">
    <citation type="journal article" date="2019" name="Biomolecules">
        <title>Unravelling the skin secretion peptides of the gliding leaf frog, Agalychnis spurrelli (Hylidae).</title>
        <authorList>
            <person name="Proano-Bolanos C."/>
            <person name="Blasco-Zuniga A."/>
            <person name="Almeida J.R."/>
            <person name="Wang L."/>
            <person name="Llumiquinga M.A."/>
            <person name="Rivera M."/>
            <person name="Zhou M."/>
            <person name="Chen T."/>
            <person name="Shaw C."/>
        </authorList>
    </citation>
    <scope>NUCLEOTIDE SEQUENCE [MRNA]</scope>
    <scope>FUNCTION</scope>
    <scope>MASS SPECTROMETRY</scope>
    <scope>AMIDATION AT LEU-67</scope>
    <scope>SYNTHESIS OF 46-67</scope>
    <scope>SUBCELLULAR LOCATION</scope>
    <source>
        <tissue>Skin secretion</tissue>
    </source>
</reference>
<protein>
    <recommendedName>
        <fullName evidence="3">Phylloseptin-SP1</fullName>
        <shortName evidence="3">PLS-SP1</shortName>
    </recommendedName>
</protein>
<name>PLS1_AGASP</name>
<comment type="function">
    <text evidence="2">Weak cationic amphipathic alpha-helical antimicrobial peptide with weak activity against Gram-positive and Gram-negative bacteria and fungi (PubMed:31671555). Has been tested against E.coli (MIC&gt;217.69 uM), S.aureus (MIC&gt;217.69 uM), K.pneumoniae (MIC&gt;189.00 uM) and C.albicans (MIC&gt;217.69 uM) (PubMed:31671555). Shows a moderate hemolytic activity (PubMed:31671555).</text>
</comment>
<comment type="subcellular location">
    <subcellularLocation>
        <location evidence="2">Secreted</location>
    </subcellularLocation>
</comment>
<comment type="tissue specificity">
    <text evidence="5">Expressed by the skin glands.</text>
</comment>
<comment type="mass spectrometry"/>
<comment type="similarity">
    <text evidence="4">Belongs to the frog skin active peptide (FSAP) family. Phylloseptin subfamily.</text>
</comment>
<feature type="signal peptide" evidence="1">
    <location>
        <begin position="1"/>
        <end position="22"/>
    </location>
</feature>
<feature type="propeptide" id="PRO_0000449981" evidence="5">
    <location>
        <begin position="23"/>
        <end position="45"/>
    </location>
</feature>
<feature type="peptide" id="PRO_0000449982" description="Phylloseptin-SP1" evidence="2">
    <location>
        <begin position="46"/>
        <end position="67"/>
    </location>
</feature>
<feature type="modified residue" description="Leucine amide" evidence="2">
    <location>
        <position position="67"/>
    </location>
</feature>
<dbReference type="EMBL" id="MK532479">
    <property type="protein sequence ID" value="QFU19629.1"/>
    <property type="molecule type" value="mRNA"/>
</dbReference>
<dbReference type="GO" id="GO:0005576">
    <property type="term" value="C:extracellular region"/>
    <property type="evidence" value="ECO:0007669"/>
    <property type="project" value="UniProtKB-SubCell"/>
</dbReference>
<dbReference type="GO" id="GO:0042742">
    <property type="term" value="P:defense response to bacterium"/>
    <property type="evidence" value="ECO:0007669"/>
    <property type="project" value="UniProtKB-KW"/>
</dbReference>
<dbReference type="GO" id="GO:0050832">
    <property type="term" value="P:defense response to fungus"/>
    <property type="evidence" value="ECO:0007669"/>
    <property type="project" value="UniProtKB-KW"/>
</dbReference>
<dbReference type="GO" id="GO:0045087">
    <property type="term" value="P:innate immune response"/>
    <property type="evidence" value="ECO:0007669"/>
    <property type="project" value="UniProtKB-KW"/>
</dbReference>
<dbReference type="GO" id="GO:0031640">
    <property type="term" value="P:killing of cells of another organism"/>
    <property type="evidence" value="ECO:0007669"/>
    <property type="project" value="UniProtKB-KW"/>
</dbReference>
<dbReference type="InterPro" id="IPR004275">
    <property type="entry name" value="Frog_antimicrobial_propeptide"/>
</dbReference>
<dbReference type="InterPro" id="IPR016322">
    <property type="entry name" value="FSAP"/>
</dbReference>
<dbReference type="Pfam" id="PF03032">
    <property type="entry name" value="FSAP_sig_propep"/>
    <property type="match status" value="1"/>
</dbReference>
<dbReference type="PIRSF" id="PIRSF001822">
    <property type="entry name" value="Dermaseptin_precursor"/>
    <property type="match status" value="1"/>
</dbReference>
<organism>
    <name type="scientific">Agalychnis spurrelli</name>
    <name type="common">Gliding leaf frog</name>
    <name type="synonym">Agalychnis litodryas</name>
    <dbReference type="NCBI Taxonomy" id="317303"/>
    <lineage>
        <taxon>Eukaryota</taxon>
        <taxon>Metazoa</taxon>
        <taxon>Chordata</taxon>
        <taxon>Craniata</taxon>
        <taxon>Vertebrata</taxon>
        <taxon>Euteleostomi</taxon>
        <taxon>Amphibia</taxon>
        <taxon>Batrachia</taxon>
        <taxon>Anura</taxon>
        <taxon>Neobatrachia</taxon>
        <taxon>Hyloidea</taxon>
        <taxon>Hylidae</taxon>
        <taxon>Phyllomedusinae</taxon>
        <taxon>Agalychnis</taxon>
    </lineage>
</organism>
<accession>A0A5P9K461</accession>
<evidence type="ECO:0000255" key="1"/>
<evidence type="ECO:0000269" key="2">
    <source>
    </source>
</evidence>
<evidence type="ECO:0000303" key="3">
    <source>
    </source>
</evidence>
<evidence type="ECO:0000305" key="4"/>
<evidence type="ECO:0000305" key="5">
    <source>
    </source>
</evidence>
<proteinExistence type="evidence at protein level"/>
<sequence>MAFLKKSLFLVLFLGLVSLSICEEKERETKEEENEQEDDNREEKRFLSLIPHVISAIPHVVNALSNLG</sequence>
<keyword id="KW-0027">Amidation</keyword>
<keyword id="KW-0878">Amphibian defense peptide</keyword>
<keyword id="KW-0044">Antibiotic</keyword>
<keyword id="KW-0929">Antimicrobial</keyword>
<keyword id="KW-0165">Cleavage on pair of basic residues</keyword>
<keyword id="KW-0204">Cytolysis</keyword>
<keyword id="KW-0295">Fungicide</keyword>
<keyword id="KW-0354">Hemolysis</keyword>
<keyword id="KW-0391">Immunity</keyword>
<keyword id="KW-0399">Innate immunity</keyword>
<keyword id="KW-0964">Secreted</keyword>
<keyword id="KW-0732">Signal</keyword>